<reference key="1">
    <citation type="journal article" date="1998" name="Regul. Pept.">
        <title>Amino acid sequences of both isoforms of crustacean hyperglycemic hormone (CHH) and corresponding precursor-related peptide in Cancer pagurus.</title>
        <authorList>
            <person name="Chung J.S."/>
            <person name="Wilkinson M.C."/>
            <person name="Webster S.G."/>
        </authorList>
    </citation>
    <scope>PROTEIN SEQUENCE</scope>
    <scope>PYROGLUTAMATE FORMATION AT GLN-1</scope>
    <scope>AMIDATION AT VAL-72</scope>
    <source>
        <tissue>Sinus gland</tissue>
    </source>
</reference>
<organism>
    <name type="scientific">Cancer pagurus</name>
    <name type="common">Rock crab</name>
    <dbReference type="NCBI Taxonomy" id="6755"/>
    <lineage>
        <taxon>Eukaryota</taxon>
        <taxon>Metazoa</taxon>
        <taxon>Ecdysozoa</taxon>
        <taxon>Arthropoda</taxon>
        <taxon>Crustacea</taxon>
        <taxon>Multicrustacea</taxon>
        <taxon>Malacostraca</taxon>
        <taxon>Eumalacostraca</taxon>
        <taxon>Eucarida</taxon>
        <taxon>Decapoda</taxon>
        <taxon>Pleocyemata</taxon>
        <taxon>Brachyura</taxon>
        <taxon>Eubrachyura</taxon>
        <taxon>Cancroidea</taxon>
        <taxon>Cancridae</taxon>
        <taxon>Cancer</taxon>
    </lineage>
</organism>
<dbReference type="SMR" id="P81032"/>
<dbReference type="GO" id="GO:0005576">
    <property type="term" value="C:extracellular region"/>
    <property type="evidence" value="ECO:0007669"/>
    <property type="project" value="UniProtKB-SubCell"/>
</dbReference>
<dbReference type="GO" id="GO:0005184">
    <property type="term" value="F:neuropeptide hormone activity"/>
    <property type="evidence" value="ECO:0007669"/>
    <property type="project" value="InterPro"/>
</dbReference>
<dbReference type="GO" id="GO:0007623">
    <property type="term" value="P:circadian rhythm"/>
    <property type="evidence" value="ECO:0007669"/>
    <property type="project" value="TreeGrafter"/>
</dbReference>
<dbReference type="GO" id="GO:0006006">
    <property type="term" value="P:glucose metabolic process"/>
    <property type="evidence" value="ECO:0007669"/>
    <property type="project" value="UniProtKB-KW"/>
</dbReference>
<dbReference type="GO" id="GO:0007218">
    <property type="term" value="P:neuropeptide signaling pathway"/>
    <property type="evidence" value="ECO:0007669"/>
    <property type="project" value="UniProtKB-KW"/>
</dbReference>
<dbReference type="Gene3D" id="1.10.2010.10">
    <property type="entry name" value="Crustacean CHH/MIH/GIH neurohormone"/>
    <property type="match status" value="1"/>
</dbReference>
<dbReference type="InterPro" id="IPR018251">
    <property type="entry name" value="Crust_neurhormone_CS"/>
</dbReference>
<dbReference type="InterPro" id="IPR031098">
    <property type="entry name" value="Crust_neurohorm"/>
</dbReference>
<dbReference type="InterPro" id="IPR035957">
    <property type="entry name" value="Crust_neurohorm_sf"/>
</dbReference>
<dbReference type="InterPro" id="IPR001166">
    <property type="entry name" value="Hyperglycemic"/>
</dbReference>
<dbReference type="InterPro" id="IPR000346">
    <property type="entry name" value="Hyperglycemic1"/>
</dbReference>
<dbReference type="PANTHER" id="PTHR35981">
    <property type="entry name" value="ION TRANSPORT PEPTIDE, ISOFORM C"/>
    <property type="match status" value="1"/>
</dbReference>
<dbReference type="PANTHER" id="PTHR35981:SF2">
    <property type="entry name" value="ION TRANSPORT PEPTIDE, ISOFORM C"/>
    <property type="match status" value="1"/>
</dbReference>
<dbReference type="Pfam" id="PF01147">
    <property type="entry name" value="Crust_neurohorm"/>
    <property type="match status" value="1"/>
</dbReference>
<dbReference type="PRINTS" id="PR00548">
    <property type="entry name" value="HYPRGLYCEMC1"/>
</dbReference>
<dbReference type="PRINTS" id="PR00550">
    <property type="entry name" value="HYPRGLYCEMIC"/>
</dbReference>
<dbReference type="SUPFAM" id="SSF81778">
    <property type="entry name" value="Crustacean CHH/MIH/GIH neurohormone"/>
    <property type="match status" value="1"/>
</dbReference>
<dbReference type="PROSITE" id="PS01250">
    <property type="entry name" value="CHH_MIH_GIH"/>
    <property type="match status" value="1"/>
</dbReference>
<evidence type="ECO:0000269" key="1">
    <source>
    </source>
</evidence>
<evidence type="ECO:0000305" key="2"/>
<proteinExistence type="evidence at protein level"/>
<feature type="chain" id="PRO_0000209854" description="Crustacean hyperglycemic hormone">
    <location>
        <begin position="1"/>
        <end position="72"/>
    </location>
</feature>
<feature type="modified residue" description="Pyrrolidone carboxylic acid; partial" evidence="1">
    <location>
        <position position="1"/>
    </location>
</feature>
<feature type="modified residue" description="Valine amide" evidence="1">
    <location>
        <position position="72"/>
    </location>
</feature>
<feature type="disulfide bond">
    <location>
        <begin position="7"/>
        <end position="43"/>
    </location>
</feature>
<feature type="disulfide bond">
    <location>
        <begin position="23"/>
        <end position="39"/>
    </location>
</feature>
<feature type="disulfide bond">
    <location>
        <begin position="26"/>
        <end position="52"/>
    </location>
</feature>
<protein>
    <recommendedName>
        <fullName>Crustacean hyperglycemic hormone</fullName>
        <shortName>CHH</shortName>
    </recommendedName>
</protein>
<accession>P81032</accession>
<sequence length="72" mass="8442">QIYDTSCKGVYDRGLFSDLEHVCDDCYNLYRNSYVASACRSNCYSNVVFRQCMEELLLMDEFDKYARAVQIV</sequence>
<comment type="function">
    <text>Hormone found in the sinus gland of isopods and decapods which controls the blood sugar level. Has a secretagogue action over the amylase released from the midgut gland. May act as a stress hormone and may be involved in the control of molting and reproduction.</text>
</comment>
<comment type="subcellular location">
    <subcellularLocation>
        <location>Secreted</location>
    </subcellularLocation>
</comment>
<comment type="tissue specificity">
    <text>Produced by the medulla terminalis X-organ in the eyestalks and transported to the sinus gland where they are stored and released.</text>
</comment>
<comment type="PTM">
    <text>The N-terminus forms pyrrolidone carboxylic acid in isoform CHH-II and is free in isoform CHH-I.</text>
</comment>
<comment type="similarity">
    <text evidence="2">Belongs to the arthropod CHH/MIH/GIH/VIH hormone family.</text>
</comment>
<keyword id="KW-0027">Amidation</keyword>
<keyword id="KW-0119">Carbohydrate metabolism</keyword>
<keyword id="KW-0903">Direct protein sequencing</keyword>
<keyword id="KW-1015">Disulfide bond</keyword>
<keyword id="KW-0313">Glucose metabolism</keyword>
<keyword id="KW-0372">Hormone</keyword>
<keyword id="KW-0527">Neuropeptide</keyword>
<keyword id="KW-0873">Pyrrolidone carboxylic acid</keyword>
<keyword id="KW-0964">Secreted</keyword>
<name>CHH_CANPG</name>